<reference key="1">
    <citation type="journal article" date="2005" name="Nature">
        <title>The map-based sequence of the rice genome.</title>
        <authorList>
            <consortium name="International rice genome sequencing project (IRGSP)"/>
        </authorList>
    </citation>
    <scope>NUCLEOTIDE SEQUENCE [LARGE SCALE GENOMIC DNA]</scope>
    <source>
        <strain>cv. Nipponbare</strain>
    </source>
</reference>
<reference key="2">
    <citation type="journal article" date="2013" name="Rice">
        <title>Improvement of the Oryza sativa Nipponbare reference genome using next generation sequence and optical map data.</title>
        <authorList>
            <person name="Kawahara Y."/>
            <person name="de la Bastide M."/>
            <person name="Hamilton J.P."/>
            <person name="Kanamori H."/>
            <person name="McCombie W.R."/>
            <person name="Ouyang S."/>
            <person name="Schwartz D.C."/>
            <person name="Tanaka T."/>
            <person name="Wu J."/>
            <person name="Zhou S."/>
            <person name="Childs K.L."/>
            <person name="Davidson R.M."/>
            <person name="Lin H."/>
            <person name="Quesada-Ocampo L."/>
            <person name="Vaillancourt B."/>
            <person name="Sakai H."/>
            <person name="Lee S.S."/>
            <person name="Kim J."/>
            <person name="Numa H."/>
            <person name="Itoh T."/>
            <person name="Buell C.R."/>
            <person name="Matsumoto T."/>
        </authorList>
    </citation>
    <scope>GENOME REANNOTATION</scope>
    <source>
        <strain>cv. Nipponbare</strain>
    </source>
</reference>
<reference key="3">
    <citation type="journal article" date="2003" name="Science">
        <title>Collection, mapping, and annotation of over 28,000 cDNA clones from japonica rice.</title>
        <authorList>
            <consortium name="The rice full-length cDNA consortium"/>
        </authorList>
    </citation>
    <scope>NUCLEOTIDE SEQUENCE [LARGE SCALE MRNA] OF 36-582</scope>
    <source>
        <strain>cv. Nipponbare</strain>
    </source>
</reference>
<dbReference type="EMBL" id="AP004744">
    <property type="protein sequence ID" value="BAD45850.1"/>
    <property type="molecule type" value="Genomic_DNA"/>
</dbReference>
<dbReference type="EMBL" id="AP005769">
    <property type="protein sequence ID" value="BAD46426.1"/>
    <property type="molecule type" value="Genomic_DNA"/>
</dbReference>
<dbReference type="EMBL" id="AP014962">
    <property type="status" value="NOT_ANNOTATED_CDS"/>
    <property type="molecule type" value="Genomic_DNA"/>
</dbReference>
<dbReference type="EMBL" id="AK072287">
    <property type="status" value="NOT_ANNOTATED_CDS"/>
    <property type="molecule type" value="mRNA"/>
</dbReference>
<dbReference type="EMBL" id="AK102315">
    <property type="status" value="NOT_ANNOTATED_CDS"/>
    <property type="molecule type" value="mRNA"/>
</dbReference>
<dbReference type="RefSeq" id="XP_015644118.1">
    <property type="nucleotide sequence ID" value="XM_015788632.1"/>
</dbReference>
<dbReference type="SMR" id="Q651U1"/>
<dbReference type="FunCoup" id="Q651U1">
    <property type="interactions" value="44"/>
</dbReference>
<dbReference type="STRING" id="39947.Q651U1"/>
<dbReference type="PaxDb" id="39947-Q651U1"/>
<dbReference type="GeneID" id="4341749"/>
<dbReference type="eggNOG" id="KOG0133">
    <property type="taxonomic scope" value="Eukaryota"/>
</dbReference>
<dbReference type="InParanoid" id="Q651U1"/>
<dbReference type="OrthoDB" id="435881at2759"/>
<dbReference type="Proteomes" id="UP000000763">
    <property type="component" value="Chromosome 6"/>
</dbReference>
<dbReference type="Proteomes" id="UP000059680">
    <property type="component" value="Chromosome 6"/>
</dbReference>
<dbReference type="GO" id="GO:0009507">
    <property type="term" value="C:chloroplast"/>
    <property type="evidence" value="ECO:0007669"/>
    <property type="project" value="UniProtKB-SubCell"/>
</dbReference>
<dbReference type="GO" id="GO:0005739">
    <property type="term" value="C:mitochondrion"/>
    <property type="evidence" value="ECO:0007669"/>
    <property type="project" value="UniProtKB-SubCell"/>
</dbReference>
<dbReference type="GO" id="GO:0003904">
    <property type="term" value="F:deoxyribodipyrimidine photo-lyase activity"/>
    <property type="evidence" value="ECO:0000318"/>
    <property type="project" value="GO_Central"/>
</dbReference>
<dbReference type="GO" id="GO:0003677">
    <property type="term" value="F:DNA binding"/>
    <property type="evidence" value="ECO:0000318"/>
    <property type="project" value="GO_Central"/>
</dbReference>
<dbReference type="GO" id="GO:0071949">
    <property type="term" value="F:FAD binding"/>
    <property type="evidence" value="ECO:0000318"/>
    <property type="project" value="GO_Central"/>
</dbReference>
<dbReference type="GO" id="GO:0000719">
    <property type="term" value="P:photoreactive repair"/>
    <property type="evidence" value="ECO:0000318"/>
    <property type="project" value="GO_Central"/>
</dbReference>
<dbReference type="Gene3D" id="1.25.40.80">
    <property type="match status" value="1"/>
</dbReference>
<dbReference type="Gene3D" id="1.10.579.10">
    <property type="entry name" value="DNA Cyclobutane Dipyrimidine Photolyase, subunit A, domain 3"/>
    <property type="match status" value="1"/>
</dbReference>
<dbReference type="Gene3D" id="3.40.50.620">
    <property type="entry name" value="HUPs"/>
    <property type="match status" value="1"/>
</dbReference>
<dbReference type="InterPro" id="IPR014133">
    <property type="entry name" value="Cry_DASH"/>
</dbReference>
<dbReference type="InterPro" id="IPR036134">
    <property type="entry name" value="Crypto/Photolyase_FAD-like_sf"/>
</dbReference>
<dbReference type="InterPro" id="IPR036155">
    <property type="entry name" value="Crypto/Photolyase_N_sf"/>
</dbReference>
<dbReference type="InterPro" id="IPR005101">
    <property type="entry name" value="Cryptochr/Photolyase_FAD-bd"/>
</dbReference>
<dbReference type="InterPro" id="IPR002081">
    <property type="entry name" value="Cryptochrome/DNA_photolyase_1"/>
</dbReference>
<dbReference type="InterPro" id="IPR006050">
    <property type="entry name" value="DNA_photolyase_N"/>
</dbReference>
<dbReference type="InterPro" id="IPR014729">
    <property type="entry name" value="Rossmann-like_a/b/a_fold"/>
</dbReference>
<dbReference type="NCBIfam" id="TIGR02765">
    <property type="entry name" value="crypto_DASH"/>
    <property type="match status" value="1"/>
</dbReference>
<dbReference type="PANTHER" id="PTHR11455">
    <property type="entry name" value="CRYPTOCHROME"/>
    <property type="match status" value="1"/>
</dbReference>
<dbReference type="PANTHER" id="PTHR11455:SF22">
    <property type="entry name" value="CRYPTOCHROME DASH"/>
    <property type="match status" value="1"/>
</dbReference>
<dbReference type="Pfam" id="PF00875">
    <property type="entry name" value="DNA_photolyase"/>
    <property type="match status" value="1"/>
</dbReference>
<dbReference type="Pfam" id="PF03441">
    <property type="entry name" value="FAD_binding_7"/>
    <property type="match status" value="1"/>
</dbReference>
<dbReference type="PRINTS" id="PR00147">
    <property type="entry name" value="DNAPHOTLYASE"/>
</dbReference>
<dbReference type="SUPFAM" id="SSF48173">
    <property type="entry name" value="Cryptochrome/photolyase FAD-binding domain"/>
    <property type="match status" value="1"/>
</dbReference>
<dbReference type="SUPFAM" id="SSF52425">
    <property type="entry name" value="Cryptochrome/photolyase, N-terminal domain"/>
    <property type="match status" value="1"/>
</dbReference>
<dbReference type="PROSITE" id="PS51645">
    <property type="entry name" value="PHR_CRY_ALPHA_BETA"/>
    <property type="match status" value="1"/>
</dbReference>
<keyword id="KW-0150">Chloroplast</keyword>
<keyword id="KW-0157">Chromophore</keyword>
<keyword id="KW-0238">DNA-binding</keyword>
<keyword id="KW-0274">FAD</keyword>
<keyword id="KW-0285">Flavoprotein</keyword>
<keyword id="KW-0496">Mitochondrion</keyword>
<keyword id="KW-0934">Plastid</keyword>
<keyword id="KW-1185">Reference proteome</keyword>
<keyword id="KW-0809">Transit peptide</keyword>
<gene>
    <name type="primary">CRYD</name>
    <name type="ordered locus">Os06g0661800</name>
    <name type="ordered locus">LOC_Os06g45100</name>
    <name type="ORF">OSJNBa0051O02.40</name>
    <name type="ORF">OSJNBb0065C04.7</name>
</gene>
<feature type="transit peptide" description="Chloroplast and mitochondrion" evidence="2">
    <location>
        <begin position="1"/>
        <end position="49"/>
    </location>
</feature>
<feature type="chain" id="PRO_0000235320" description="Cryptochrome DASH, chloroplastic/mitochondrial">
    <location>
        <begin position="50"/>
        <end position="582"/>
    </location>
</feature>
<feature type="domain" description="Photolyase/cryptochrome alpha/beta">
    <location>
        <begin position="84"/>
        <end position="234"/>
    </location>
</feature>
<feature type="region of interest" description="Disordered" evidence="3">
    <location>
        <begin position="560"/>
        <end position="582"/>
    </location>
</feature>
<feature type="compositionally biased region" description="Basic residues" evidence="3">
    <location>
        <begin position="570"/>
        <end position="582"/>
    </location>
</feature>
<feature type="sequence conflict" description="In Ref. 3." evidence="4" ref="3">
    <original>A</original>
    <variation>S</variation>
    <location>
        <position position="304"/>
    </location>
</feature>
<proteinExistence type="evidence at transcript level"/>
<name>CRYD_ORYSJ</name>
<sequence>MLHFLSSSSPLNPQFLLLPRQSARLRVLLSIPVSAMSSSSSSSSRGALAAAAVPSLSADEAGAAADEAFLRYTSPSMRRSGGGGVAIVWFRNDLRVLDNEAVVRAWAASDAVLPVYCVDPRISAGSTHYFGFPKTGALRAQFLIECLEDLKRNLTKQGLDLLIRHGKPEDILPSIAKAVTAHTVYAHKETCSEELLVEHLVRKGLEQVVIPQGGASNQKKPRNPKLQLIWGATLYHVDDLPFSVNNLPDVYTQFRKAVESKSSVRNCSKLPPSLGPPPGSGLDEIGGWGTVPTLESLGLSMTKAEKGMHFVGGESAALGRVHEYFWKKDQLKVYKETRNGMLGPDYSTKFSPWLASGSLSPRYICEEVKRYEKQRIANDSTYWVLFELIWRDYFRFISAKYGNSIFHLGGPRNVESKWSQDQALFESWRDGRTGYPLIDANMKELLATGFMSNRGRQIVCSFLVRDMGIDWRMGAEWFETCLLDYDPASNYGNWTYGAGVGNDPREDRYFSIPKQAKTYDPDGEYVAYWLPELRSIAKERRNFPGASYIKQVVPLKFDGGHQKRDQQFNRQRRPGHMYRRQK</sequence>
<protein>
    <recommendedName>
        <fullName>Cryptochrome DASH, chloroplastic/mitochondrial</fullName>
    </recommendedName>
</protein>
<comment type="function">
    <text evidence="1">May have a photoreceptor function. Binds ss- and ds-DNA in a sequence non-specific manner, lacks photolyase activity (By similarity).</text>
</comment>
<comment type="cofactor">
    <cofactor evidence="1">
        <name>FAD</name>
        <dbReference type="ChEBI" id="CHEBI:57692"/>
    </cofactor>
    <text evidence="1">Binds 1 FAD per subunit.</text>
</comment>
<comment type="cofactor">
    <cofactor evidence="1">
        <name>(6R)-5,10-methylene-5,6,7,8-tetrahydrofolate</name>
        <dbReference type="ChEBI" id="CHEBI:15636"/>
    </cofactor>
    <text evidence="1">Binds 1 5,10-methenyltetrahydrofolate (MTHF) per subunit.</text>
</comment>
<comment type="subcellular location">
    <subcellularLocation>
        <location evidence="1">Plastid</location>
        <location evidence="1">Chloroplast</location>
    </subcellularLocation>
    <subcellularLocation>
        <location evidence="1">Mitochondrion</location>
    </subcellularLocation>
</comment>
<comment type="similarity">
    <text evidence="4">Belongs to the DNA photolyase class-1 family.</text>
</comment>
<organism>
    <name type="scientific">Oryza sativa subsp. japonica</name>
    <name type="common">Rice</name>
    <dbReference type="NCBI Taxonomy" id="39947"/>
    <lineage>
        <taxon>Eukaryota</taxon>
        <taxon>Viridiplantae</taxon>
        <taxon>Streptophyta</taxon>
        <taxon>Embryophyta</taxon>
        <taxon>Tracheophyta</taxon>
        <taxon>Spermatophyta</taxon>
        <taxon>Magnoliopsida</taxon>
        <taxon>Liliopsida</taxon>
        <taxon>Poales</taxon>
        <taxon>Poaceae</taxon>
        <taxon>BOP clade</taxon>
        <taxon>Oryzoideae</taxon>
        <taxon>Oryzeae</taxon>
        <taxon>Oryzinae</taxon>
        <taxon>Oryza</taxon>
        <taxon>Oryza sativa</taxon>
    </lineage>
</organism>
<accession>Q651U1</accession>
<evidence type="ECO:0000250" key="1"/>
<evidence type="ECO:0000255" key="2"/>
<evidence type="ECO:0000256" key="3">
    <source>
        <dbReference type="SAM" id="MobiDB-lite"/>
    </source>
</evidence>
<evidence type="ECO:0000305" key="4"/>